<feature type="chain" id="PRO_0000292738" description="UPF0342 protein lwe2240">
    <location>
        <begin position="1"/>
        <end position="117"/>
    </location>
</feature>
<sequence length="117" mass="13518">MAVNIYDLAHDLDKGIRETPEFLSLQDAYREVNENADAKAKFERFRDVQVTIQEKQMTGQEIDDETVNVAQEVAQEVQENELIVKLMEKEQAMSTIINDLNRIIMTPLQDLYNVSND</sequence>
<reference key="1">
    <citation type="journal article" date="2006" name="J. Bacteriol.">
        <title>Whole-genome sequence of Listeria welshimeri reveals common steps in genome reduction with Listeria innocua as compared to Listeria monocytogenes.</title>
        <authorList>
            <person name="Hain T."/>
            <person name="Steinweg C."/>
            <person name="Kuenne C.T."/>
            <person name="Billion A."/>
            <person name="Ghai R."/>
            <person name="Chatterjee S.S."/>
            <person name="Domann E."/>
            <person name="Kaerst U."/>
            <person name="Goesmann A."/>
            <person name="Bekel T."/>
            <person name="Bartels D."/>
            <person name="Kaiser O."/>
            <person name="Meyer F."/>
            <person name="Puehler A."/>
            <person name="Weisshaar B."/>
            <person name="Wehland J."/>
            <person name="Liang C."/>
            <person name="Dandekar T."/>
            <person name="Lampidis R."/>
            <person name="Kreft J."/>
            <person name="Goebel W."/>
            <person name="Chakraborty T."/>
        </authorList>
    </citation>
    <scope>NUCLEOTIDE SEQUENCE [LARGE SCALE GENOMIC DNA]</scope>
    <source>
        <strain>ATCC 35897 / DSM 20650 / CCUG 15529 / CIP 8149 / NCTC 11857 / SLCC 5334 / V8</strain>
    </source>
</reference>
<organism>
    <name type="scientific">Listeria welshimeri serovar 6b (strain ATCC 35897 / DSM 20650 / CCUG 15529 / CIP 8149 / NCTC 11857 / SLCC 5334 / V8)</name>
    <dbReference type="NCBI Taxonomy" id="386043"/>
    <lineage>
        <taxon>Bacteria</taxon>
        <taxon>Bacillati</taxon>
        <taxon>Bacillota</taxon>
        <taxon>Bacilli</taxon>
        <taxon>Bacillales</taxon>
        <taxon>Listeriaceae</taxon>
        <taxon>Listeria</taxon>
    </lineage>
</organism>
<proteinExistence type="inferred from homology"/>
<dbReference type="EMBL" id="AM263198">
    <property type="protein sequence ID" value="CAK21658.1"/>
    <property type="molecule type" value="Genomic_DNA"/>
</dbReference>
<dbReference type="RefSeq" id="WP_011702991.1">
    <property type="nucleotide sequence ID" value="NC_008555.1"/>
</dbReference>
<dbReference type="SMR" id="A0AKX6"/>
<dbReference type="STRING" id="386043.lwe2240"/>
<dbReference type="GeneID" id="61190143"/>
<dbReference type="KEGG" id="lwe:lwe2240"/>
<dbReference type="eggNOG" id="COG3679">
    <property type="taxonomic scope" value="Bacteria"/>
</dbReference>
<dbReference type="HOGENOM" id="CLU_140243_3_0_9"/>
<dbReference type="OrthoDB" id="9811402at2"/>
<dbReference type="Proteomes" id="UP000000779">
    <property type="component" value="Chromosome"/>
</dbReference>
<dbReference type="Gene3D" id="1.20.1500.10">
    <property type="entry name" value="YheA/YmcA-like"/>
    <property type="match status" value="1"/>
</dbReference>
<dbReference type="HAMAP" id="MF_01526">
    <property type="entry name" value="UPF0342"/>
    <property type="match status" value="1"/>
</dbReference>
<dbReference type="InterPro" id="IPR010368">
    <property type="entry name" value="Com_YlbF"/>
</dbReference>
<dbReference type="InterPro" id="IPR023378">
    <property type="entry name" value="YheA/YmcA-like_dom_sf"/>
</dbReference>
<dbReference type="NCBIfam" id="NF010210">
    <property type="entry name" value="PRK13676.1-2"/>
    <property type="match status" value="1"/>
</dbReference>
<dbReference type="Pfam" id="PF06133">
    <property type="entry name" value="Com_YlbF"/>
    <property type="match status" value="1"/>
</dbReference>
<dbReference type="SUPFAM" id="SSF158622">
    <property type="entry name" value="YheA/YmcA-like"/>
    <property type="match status" value="1"/>
</dbReference>
<comment type="similarity">
    <text evidence="1">Belongs to the UPF0342 family.</text>
</comment>
<evidence type="ECO:0000255" key="1">
    <source>
        <dbReference type="HAMAP-Rule" id="MF_01526"/>
    </source>
</evidence>
<protein>
    <recommendedName>
        <fullName evidence="1">UPF0342 protein lwe2240</fullName>
    </recommendedName>
</protein>
<accession>A0AKX6</accession>
<gene>
    <name type="ordered locus">lwe2240</name>
</gene>
<name>Y2240_LISW6</name>